<evidence type="ECO:0000250" key="1"/>
<evidence type="ECO:0000250" key="2">
    <source>
        <dbReference type="UniProtKB" id="Q14699"/>
    </source>
</evidence>
<evidence type="ECO:0000256" key="3">
    <source>
        <dbReference type="SAM" id="MobiDB-lite"/>
    </source>
</evidence>
<evidence type="ECO:0000269" key="4">
    <source>
    </source>
</evidence>
<evidence type="ECO:0000269" key="5">
    <source>
    </source>
</evidence>
<evidence type="ECO:0000269" key="6">
    <source>
    </source>
</evidence>
<evidence type="ECO:0000305" key="7"/>
<evidence type="ECO:0007744" key="8">
    <source>
    </source>
</evidence>
<evidence type="ECO:0007744" key="9">
    <source>
    </source>
</evidence>
<protein>
    <recommendedName>
        <fullName>Raftlin</fullName>
    </recommendedName>
    <alternativeName>
        <fullName>Raft-linking protein</fullName>
    </alternativeName>
</protein>
<comment type="function">
    <text evidence="2 5 6">Involved in protein trafficking via association with clathrin and AP2 complex (By similarity). Upon bacterial lipopolysaccharide stimulation, mediates internalization of TLR4 to endosomes in dendritic cells and macrophages, and internalization of poly(I:C) to TLR3-positive endosomes in myeloid dendritic cells and epithelial cells; resulting in activation of TICAM1-mediated signaling and subsequent IFNB1 production (PubMed:27022195). Involved in T-cell antigen receptor-mediated signaling by regulating tyrosine kinase LCK localization, T-cell dependent antibody production and cytokine secretion (PubMed:19414744). May regulate B-cell antigen receptor-mediated signaling (By similarity). May play a pivotal role in the formation and/or maintenance of lipid rafts (By similarity).</text>
</comment>
<comment type="subunit">
    <text evidence="2">Interacts with TLR4; the interaction occurs in response to lipopolysaccharide stimulation. Interacts with CLTC; the interaction occurs in response to pathogens. Interacts with AP2A1 and AP2B1.</text>
</comment>
<comment type="subcellular location">
    <subcellularLocation>
        <location evidence="5">Cell membrane</location>
        <topology evidence="2">Lipid-anchor</topology>
    </subcellularLocation>
    <subcellularLocation>
        <location evidence="2">Cytoplasm</location>
    </subcellularLocation>
    <subcellularLocation>
        <location evidence="2">Membrane raft</location>
    </subcellularLocation>
    <subcellularLocation>
        <location evidence="2">Endosome</location>
    </subcellularLocation>
    <subcellularLocation>
        <location evidence="2">Early endosome</location>
    </subcellularLocation>
    <text evidence="2">Translocates from cytoplasm to cell membrane where it colocalizes with poly (I:C) and then moves to endosomes where it colocalizes with TLR3. Translocates from cytoplasm to cell membrane where it colocalizes with TLR4 and then together with TLR4 moves to endosomes, upon lipopolysaccharide stimulation (PubMed:27022195).</text>
</comment>
<comment type="tissue specificity">
    <text evidence="4 5">Expressed in T-cells, B-cells, thymus and spleen (at protein level) (PubMed:12805216, PubMed:19414744). Expressed in dendritic cells, macrophages, heart, lung and small intestine (PubMed:19414744).</text>
</comment>
<comment type="disruption phenotype">
    <text evidence="5 6">Mutant mice have smaller spleen, fewer splenocytes, reduced IgM production and secrete less IFNG, during antigen re-stimulation (PubMed:19414744). Double RFTN1 and RFTN2 mutant mice show no visible phenotype under pathogen-free conditions but show greatly reduced IFNB1 production in splenic dendritic cells following poly(I:C) or LPS stimulation (PubMed:27022195).</text>
</comment>
<comment type="similarity">
    <text evidence="7">Belongs to the raftlin family.</text>
</comment>
<comment type="sequence caution" evidence="7">
    <conflict type="erroneous initiation">
        <sequence resource="EMBL-CDS" id="BAD32162"/>
    </conflict>
</comment>
<comment type="sequence caution" evidence="7">
    <conflict type="erroneous initiation">
        <sequence resource="EMBL-CDS" id="BAE31871"/>
    </conflict>
</comment>
<proteinExistence type="evidence at protein level"/>
<accession>Q6A0D4</accession>
<accession>Q3U654</accession>
<accession>Q3U8P6</accession>
<accession>Q80US1</accession>
<sequence length="554" mass="61537">MGCSLNKLEKREEKRPGNIYSTLKRPQVETKVDVTYEYCFLEFTTLTAAELPRSSATRLASLRDLPDQLLELYQQGFSLAALHPFVQPTRRQEKILLEHIFRAILVKKTNRSQKAELHDEGYTLELDYCSSLEHLADQKLIPEFIKKVQEAASQGLKFVSVVPQYQPSVSSAGSRRLKPVANSVEDARDVKCTLGDRSSLENDTPKAAETDAATAGVNRRPETKPGSTGDVPSAQQPGIPSPSAENEAGEFPLRGLQPALDRSEGDPSNGPEELPSRKMEIFAFFNRPKSQQKCRQYYPVTIPLQVSKNGQTVSSLDASWLEHMSDHFRKGGVLVNAVFQLGMANDSFYGLTDGVFIFEAVSTEDNRTTQGYDAIVVEQWTVLEGTEVQTDYMPLLNSLAAYGWQLTCVLPTPILKTTREGNVSTKQIVFLQRPCLPQKTKKRESKFQWRFSRNEIHGRQTRKSKGKLSASNKQQAEENEKNLEDQFSKAGDVGNCVLGAPQWGRASEVREQRQGSAAVQNGPAGHNRDSVALRHSNPRAEAELAAGPTPTEAN</sequence>
<reference key="1">
    <citation type="journal article" date="2004" name="DNA Res.">
        <title>Prediction of the coding sequences of mouse homologues of KIAA gene: IV. The complete nucleotide sequences of 500 mouse KIAA-homologous cDNAs identified by screening of terminal sequences of cDNA clones randomly sampled from size-fractionated libraries.</title>
        <authorList>
            <person name="Okazaki N."/>
            <person name="Kikuno R."/>
            <person name="Ohara R."/>
            <person name="Inamoto S."/>
            <person name="Koseki H."/>
            <person name="Hiraoka S."/>
            <person name="Saga Y."/>
            <person name="Seino S."/>
            <person name="Nishimura M."/>
            <person name="Kaisho T."/>
            <person name="Hoshino K."/>
            <person name="Kitamura H."/>
            <person name="Nagase T."/>
            <person name="Ohara O."/>
            <person name="Koga H."/>
        </authorList>
    </citation>
    <scope>NUCLEOTIDE SEQUENCE [LARGE SCALE MRNA]</scope>
    <source>
        <tissue>Embryonic tail</tissue>
    </source>
</reference>
<reference key="2">
    <citation type="journal article" date="2005" name="Science">
        <title>The transcriptional landscape of the mammalian genome.</title>
        <authorList>
            <person name="Carninci P."/>
            <person name="Kasukawa T."/>
            <person name="Katayama S."/>
            <person name="Gough J."/>
            <person name="Frith M.C."/>
            <person name="Maeda N."/>
            <person name="Oyama R."/>
            <person name="Ravasi T."/>
            <person name="Lenhard B."/>
            <person name="Wells C."/>
            <person name="Kodzius R."/>
            <person name="Shimokawa K."/>
            <person name="Bajic V.B."/>
            <person name="Brenner S.E."/>
            <person name="Batalov S."/>
            <person name="Forrest A.R."/>
            <person name="Zavolan M."/>
            <person name="Davis M.J."/>
            <person name="Wilming L.G."/>
            <person name="Aidinis V."/>
            <person name="Allen J.E."/>
            <person name="Ambesi-Impiombato A."/>
            <person name="Apweiler R."/>
            <person name="Aturaliya R.N."/>
            <person name="Bailey T.L."/>
            <person name="Bansal M."/>
            <person name="Baxter L."/>
            <person name="Beisel K.W."/>
            <person name="Bersano T."/>
            <person name="Bono H."/>
            <person name="Chalk A.M."/>
            <person name="Chiu K.P."/>
            <person name="Choudhary V."/>
            <person name="Christoffels A."/>
            <person name="Clutterbuck D.R."/>
            <person name="Crowe M.L."/>
            <person name="Dalla E."/>
            <person name="Dalrymple B.P."/>
            <person name="de Bono B."/>
            <person name="Della Gatta G."/>
            <person name="di Bernardo D."/>
            <person name="Down T."/>
            <person name="Engstrom P."/>
            <person name="Fagiolini M."/>
            <person name="Faulkner G."/>
            <person name="Fletcher C.F."/>
            <person name="Fukushima T."/>
            <person name="Furuno M."/>
            <person name="Futaki S."/>
            <person name="Gariboldi M."/>
            <person name="Georgii-Hemming P."/>
            <person name="Gingeras T.R."/>
            <person name="Gojobori T."/>
            <person name="Green R.E."/>
            <person name="Gustincich S."/>
            <person name="Harbers M."/>
            <person name="Hayashi Y."/>
            <person name="Hensch T.K."/>
            <person name="Hirokawa N."/>
            <person name="Hill D."/>
            <person name="Huminiecki L."/>
            <person name="Iacono M."/>
            <person name="Ikeo K."/>
            <person name="Iwama A."/>
            <person name="Ishikawa T."/>
            <person name="Jakt M."/>
            <person name="Kanapin A."/>
            <person name="Katoh M."/>
            <person name="Kawasawa Y."/>
            <person name="Kelso J."/>
            <person name="Kitamura H."/>
            <person name="Kitano H."/>
            <person name="Kollias G."/>
            <person name="Krishnan S.P."/>
            <person name="Kruger A."/>
            <person name="Kummerfeld S.K."/>
            <person name="Kurochkin I.V."/>
            <person name="Lareau L.F."/>
            <person name="Lazarevic D."/>
            <person name="Lipovich L."/>
            <person name="Liu J."/>
            <person name="Liuni S."/>
            <person name="McWilliam S."/>
            <person name="Madan Babu M."/>
            <person name="Madera M."/>
            <person name="Marchionni L."/>
            <person name="Matsuda H."/>
            <person name="Matsuzawa S."/>
            <person name="Miki H."/>
            <person name="Mignone F."/>
            <person name="Miyake S."/>
            <person name="Morris K."/>
            <person name="Mottagui-Tabar S."/>
            <person name="Mulder N."/>
            <person name="Nakano N."/>
            <person name="Nakauchi H."/>
            <person name="Ng P."/>
            <person name="Nilsson R."/>
            <person name="Nishiguchi S."/>
            <person name="Nishikawa S."/>
            <person name="Nori F."/>
            <person name="Ohara O."/>
            <person name="Okazaki Y."/>
            <person name="Orlando V."/>
            <person name="Pang K.C."/>
            <person name="Pavan W.J."/>
            <person name="Pavesi G."/>
            <person name="Pesole G."/>
            <person name="Petrovsky N."/>
            <person name="Piazza S."/>
            <person name="Reed J."/>
            <person name="Reid J.F."/>
            <person name="Ring B.Z."/>
            <person name="Ringwald M."/>
            <person name="Rost B."/>
            <person name="Ruan Y."/>
            <person name="Salzberg S.L."/>
            <person name="Sandelin A."/>
            <person name="Schneider C."/>
            <person name="Schoenbach C."/>
            <person name="Sekiguchi K."/>
            <person name="Semple C.A."/>
            <person name="Seno S."/>
            <person name="Sessa L."/>
            <person name="Sheng Y."/>
            <person name="Shibata Y."/>
            <person name="Shimada H."/>
            <person name="Shimada K."/>
            <person name="Silva D."/>
            <person name="Sinclair B."/>
            <person name="Sperling S."/>
            <person name="Stupka E."/>
            <person name="Sugiura K."/>
            <person name="Sultana R."/>
            <person name="Takenaka Y."/>
            <person name="Taki K."/>
            <person name="Tammoja K."/>
            <person name="Tan S.L."/>
            <person name="Tang S."/>
            <person name="Taylor M.S."/>
            <person name="Tegner J."/>
            <person name="Teichmann S.A."/>
            <person name="Ueda H.R."/>
            <person name="van Nimwegen E."/>
            <person name="Verardo R."/>
            <person name="Wei C.L."/>
            <person name="Yagi K."/>
            <person name="Yamanishi H."/>
            <person name="Zabarovsky E."/>
            <person name="Zhu S."/>
            <person name="Zimmer A."/>
            <person name="Hide W."/>
            <person name="Bult C."/>
            <person name="Grimmond S.M."/>
            <person name="Teasdale R.D."/>
            <person name="Liu E.T."/>
            <person name="Brusic V."/>
            <person name="Quackenbush J."/>
            <person name="Wahlestedt C."/>
            <person name="Mattick J.S."/>
            <person name="Hume D.A."/>
            <person name="Kai C."/>
            <person name="Sasaki D."/>
            <person name="Tomaru Y."/>
            <person name="Fukuda S."/>
            <person name="Kanamori-Katayama M."/>
            <person name="Suzuki M."/>
            <person name="Aoki J."/>
            <person name="Arakawa T."/>
            <person name="Iida J."/>
            <person name="Imamura K."/>
            <person name="Itoh M."/>
            <person name="Kato T."/>
            <person name="Kawaji H."/>
            <person name="Kawagashira N."/>
            <person name="Kawashima T."/>
            <person name="Kojima M."/>
            <person name="Kondo S."/>
            <person name="Konno H."/>
            <person name="Nakano K."/>
            <person name="Ninomiya N."/>
            <person name="Nishio T."/>
            <person name="Okada M."/>
            <person name="Plessy C."/>
            <person name="Shibata K."/>
            <person name="Shiraki T."/>
            <person name="Suzuki S."/>
            <person name="Tagami M."/>
            <person name="Waki K."/>
            <person name="Watahiki A."/>
            <person name="Okamura-Oho Y."/>
            <person name="Suzuki H."/>
            <person name="Kawai J."/>
            <person name="Hayashizaki Y."/>
        </authorList>
    </citation>
    <scope>NUCLEOTIDE SEQUENCE [LARGE SCALE MRNA]</scope>
    <source>
        <strain>C57BL/6J</strain>
        <tissue>Bone marrow</tissue>
    </source>
</reference>
<reference key="3">
    <citation type="journal article" date="2004" name="Genome Res.">
        <title>The status, quality, and expansion of the NIH full-length cDNA project: the Mammalian Gene Collection (MGC).</title>
        <authorList>
            <consortium name="The MGC Project Team"/>
        </authorList>
    </citation>
    <scope>NUCLEOTIDE SEQUENCE [LARGE SCALE MRNA]</scope>
    <source>
        <strain>C57BL/6J</strain>
    </source>
</reference>
<reference key="4">
    <citation type="journal article" date="2003" name="EMBO J.">
        <title>The B cell-specific major raft protein, Raftlin, is necessary for the integrity of lipid raft and BCR signal transduction.</title>
        <authorList>
            <person name="Saeki K."/>
            <person name="Miura Y."/>
            <person name="Aki D."/>
            <person name="Kurosaki T."/>
            <person name="Yoshimura A."/>
        </authorList>
    </citation>
    <scope>TISSUE SPECIFICITY</scope>
</reference>
<reference key="5">
    <citation type="journal article" date="2009" name="Immunity">
        <title>The phagosomal proteome in interferon-gamma-activated macrophages.</title>
        <authorList>
            <person name="Trost M."/>
            <person name="English L."/>
            <person name="Lemieux S."/>
            <person name="Courcelles M."/>
            <person name="Desjardins M."/>
            <person name="Thibault P."/>
        </authorList>
    </citation>
    <scope>PHOSPHORYLATION [LARGE SCALE ANALYSIS] AT SER-183 AND SER-530</scope>
    <scope>IDENTIFICATION BY MASS SPECTROMETRY [LARGE SCALE ANALYSIS]</scope>
</reference>
<reference key="6">
    <citation type="journal article" date="2009" name="J. Immunol.">
        <title>A major lipid raft protein raftlin modulates T cell receptor signaling and enhances th17-mediated autoimmune responses.</title>
        <authorList>
            <person name="Saeki K."/>
            <person name="Fukuyama S."/>
            <person name="Ayada T."/>
            <person name="Nakaya M."/>
            <person name="Aki D."/>
            <person name="Takaesu G."/>
            <person name="Hanada T."/>
            <person name="Matsumura Y."/>
            <person name="Kobayashi T."/>
            <person name="Nakagawa R."/>
            <person name="Yoshimura A."/>
        </authorList>
    </citation>
    <scope>FUNCTION</scope>
    <scope>SUBCELLULAR LOCATION</scope>
    <scope>TISSUE SPECIFICITY</scope>
    <scope>DISRUPTION PHENOTYPE</scope>
</reference>
<reference key="7">
    <citation type="journal article" date="2010" name="Cell">
        <title>A tissue-specific atlas of mouse protein phosphorylation and expression.</title>
        <authorList>
            <person name="Huttlin E.L."/>
            <person name="Jedrychowski M.P."/>
            <person name="Elias J.E."/>
            <person name="Goswami T."/>
            <person name="Rad R."/>
            <person name="Beausoleil S.A."/>
            <person name="Villen J."/>
            <person name="Haas W."/>
            <person name="Sowa M.E."/>
            <person name="Gygi S.P."/>
        </authorList>
    </citation>
    <scope>PHOSPHORYLATION [LARGE SCALE ANALYSIS] AT SER-507</scope>
    <scope>IDENTIFICATION BY MASS SPECTROMETRY [LARGE SCALE ANALYSIS]</scope>
    <source>
        <tissue>Heart</tissue>
        <tissue>Lung</tissue>
        <tissue>Spleen</tissue>
    </source>
</reference>
<reference key="8">
    <citation type="journal article" date="2016" name="J. Immunol.">
        <title>Raftlin controls lipopolysaccharide-induced TLR4 internalization and TICAM-1 signaling in a cell type-specific manner.</title>
        <authorList>
            <person name="Tatematsu M."/>
            <person name="Yoshida R."/>
            <person name="Morioka Y."/>
            <person name="Ishii N."/>
            <person name="Funami K."/>
            <person name="Watanabe A."/>
            <person name="Saeki K."/>
            <person name="Seya T."/>
            <person name="Matsumoto M."/>
        </authorList>
    </citation>
    <scope>FUNCTION</scope>
    <scope>TISSUE SPECIFICITY</scope>
</reference>
<dbReference type="EMBL" id="AK172884">
    <property type="protein sequence ID" value="BAD32162.1"/>
    <property type="status" value="ALT_INIT"/>
    <property type="molecule type" value="mRNA"/>
</dbReference>
<dbReference type="EMBL" id="AK152130">
    <property type="protein sequence ID" value="BAE30971.1"/>
    <property type="molecule type" value="mRNA"/>
</dbReference>
<dbReference type="EMBL" id="AK153288">
    <property type="protein sequence ID" value="BAE31871.1"/>
    <property type="status" value="ALT_INIT"/>
    <property type="molecule type" value="mRNA"/>
</dbReference>
<dbReference type="EMBL" id="AK155870">
    <property type="protein sequence ID" value="BAE33473.1"/>
    <property type="molecule type" value="mRNA"/>
</dbReference>
<dbReference type="EMBL" id="BC052074">
    <property type="protein sequence ID" value="AAH52074.1"/>
    <property type="molecule type" value="mRNA"/>
</dbReference>
<dbReference type="CCDS" id="CCDS28873.1"/>
<dbReference type="RefSeq" id="NP_852062.1">
    <property type="nucleotide sequence ID" value="NM_181397.2"/>
</dbReference>
<dbReference type="BioGRID" id="218128">
    <property type="interactions" value="2"/>
</dbReference>
<dbReference type="FunCoup" id="Q6A0D4">
    <property type="interactions" value="354"/>
</dbReference>
<dbReference type="IntAct" id="Q6A0D4">
    <property type="interactions" value="1"/>
</dbReference>
<dbReference type="MINT" id="Q6A0D4"/>
<dbReference type="STRING" id="10090.ENSMUSP00000046524"/>
<dbReference type="GlyGen" id="Q6A0D4">
    <property type="glycosylation" value="3 sites, 1 O-linked glycan (1 site)"/>
</dbReference>
<dbReference type="iPTMnet" id="Q6A0D4"/>
<dbReference type="PhosphoSitePlus" id="Q6A0D4"/>
<dbReference type="SwissPalm" id="Q6A0D4"/>
<dbReference type="jPOST" id="Q6A0D4"/>
<dbReference type="PaxDb" id="10090-ENSMUSP00000046524"/>
<dbReference type="PeptideAtlas" id="Q6A0D4"/>
<dbReference type="ProteomicsDB" id="255316"/>
<dbReference type="Antibodypedia" id="53317">
    <property type="antibodies" value="119 antibodies from 24 providers"/>
</dbReference>
<dbReference type="Ensembl" id="ENSMUST00000044503.14">
    <property type="protein sequence ID" value="ENSMUSP00000046524.8"/>
    <property type="gene ID" value="ENSMUSG00000039316.15"/>
</dbReference>
<dbReference type="GeneID" id="76438"/>
<dbReference type="KEGG" id="mmu:76438"/>
<dbReference type="UCSC" id="uc008cyr.1">
    <property type="organism name" value="mouse"/>
</dbReference>
<dbReference type="AGR" id="MGI:1923688"/>
<dbReference type="CTD" id="23180"/>
<dbReference type="MGI" id="MGI:1923688">
    <property type="gene designation" value="Rftn1"/>
</dbReference>
<dbReference type="VEuPathDB" id="HostDB:ENSMUSG00000039316"/>
<dbReference type="eggNOG" id="ENOG502QVP2">
    <property type="taxonomic scope" value="Eukaryota"/>
</dbReference>
<dbReference type="GeneTree" id="ENSGT00530000063609"/>
<dbReference type="InParanoid" id="Q6A0D4"/>
<dbReference type="OMA" id="QYQLYRA"/>
<dbReference type="OrthoDB" id="9942562at2759"/>
<dbReference type="PhylomeDB" id="Q6A0D4"/>
<dbReference type="TreeFam" id="TF333285"/>
<dbReference type="BioGRID-ORCS" id="76438">
    <property type="hits" value="4 hits in 79 CRISPR screens"/>
</dbReference>
<dbReference type="CD-CODE" id="CE726F99">
    <property type="entry name" value="Postsynaptic density"/>
</dbReference>
<dbReference type="ChiTaRS" id="Rftn1">
    <property type="organism name" value="mouse"/>
</dbReference>
<dbReference type="PRO" id="PR:Q6A0D4"/>
<dbReference type="Proteomes" id="UP000000589">
    <property type="component" value="Chromosome 17"/>
</dbReference>
<dbReference type="RNAct" id="Q6A0D4">
    <property type="molecule type" value="protein"/>
</dbReference>
<dbReference type="Bgee" id="ENSMUSG00000039316">
    <property type="expression patterns" value="Expressed in mesenteric lymph node and 220 other cell types or tissues"/>
</dbReference>
<dbReference type="ExpressionAtlas" id="Q6A0D4">
    <property type="expression patterns" value="baseline and differential"/>
</dbReference>
<dbReference type="GO" id="GO:0005737">
    <property type="term" value="C:cytoplasm"/>
    <property type="evidence" value="ECO:0000266"/>
    <property type="project" value="MGI"/>
</dbReference>
<dbReference type="GO" id="GO:0005769">
    <property type="term" value="C:early endosome"/>
    <property type="evidence" value="ECO:0007669"/>
    <property type="project" value="UniProtKB-SubCell"/>
</dbReference>
<dbReference type="GO" id="GO:0005768">
    <property type="term" value="C:endosome"/>
    <property type="evidence" value="ECO:0000266"/>
    <property type="project" value="MGI"/>
</dbReference>
<dbReference type="GO" id="GO:0045121">
    <property type="term" value="C:membrane raft"/>
    <property type="evidence" value="ECO:0000266"/>
    <property type="project" value="MGI"/>
</dbReference>
<dbReference type="GO" id="GO:0005886">
    <property type="term" value="C:plasma membrane"/>
    <property type="evidence" value="ECO:0000266"/>
    <property type="project" value="MGI"/>
</dbReference>
<dbReference type="GO" id="GO:0032991">
    <property type="term" value="C:protein-containing complex"/>
    <property type="evidence" value="ECO:0000266"/>
    <property type="project" value="MGI"/>
</dbReference>
<dbReference type="GO" id="GO:0003725">
    <property type="term" value="F:double-stranded RNA binding"/>
    <property type="evidence" value="ECO:0000266"/>
    <property type="project" value="MGI"/>
</dbReference>
<dbReference type="GO" id="GO:0050853">
    <property type="term" value="P:B cell receptor signaling pathway"/>
    <property type="evidence" value="ECO:0007669"/>
    <property type="project" value="Ensembl"/>
</dbReference>
<dbReference type="GO" id="GO:0033227">
    <property type="term" value="P:dsRNA transport"/>
    <property type="evidence" value="ECO:0000266"/>
    <property type="project" value="MGI"/>
</dbReference>
<dbReference type="GO" id="GO:0001765">
    <property type="term" value="P:membrane raft assembly"/>
    <property type="evidence" value="ECO:0007669"/>
    <property type="project" value="Ensembl"/>
</dbReference>
<dbReference type="GO" id="GO:0040010">
    <property type="term" value="P:positive regulation of growth rate"/>
    <property type="evidence" value="ECO:0007669"/>
    <property type="project" value="Ensembl"/>
</dbReference>
<dbReference type="GO" id="GO:0032740">
    <property type="term" value="P:positive regulation of interleukin-17 production"/>
    <property type="evidence" value="ECO:0000315"/>
    <property type="project" value="UniProtKB"/>
</dbReference>
<dbReference type="GO" id="GO:1903044">
    <property type="term" value="P:protein localization to membrane raft"/>
    <property type="evidence" value="ECO:0000315"/>
    <property type="project" value="UniProtKB"/>
</dbReference>
<dbReference type="GO" id="GO:0032596">
    <property type="term" value="P:protein transport into membrane raft"/>
    <property type="evidence" value="ECO:0000315"/>
    <property type="project" value="UniProtKB"/>
</dbReference>
<dbReference type="GO" id="GO:0043330">
    <property type="term" value="P:response to exogenous dsRNA"/>
    <property type="evidence" value="ECO:0000266"/>
    <property type="project" value="MGI"/>
</dbReference>
<dbReference type="GO" id="GO:0002457">
    <property type="term" value="P:T cell antigen processing and presentation"/>
    <property type="evidence" value="ECO:0000315"/>
    <property type="project" value="UniProtKB"/>
</dbReference>
<dbReference type="GO" id="GO:0050852">
    <property type="term" value="P:T cell receptor signaling pathway"/>
    <property type="evidence" value="ECO:0000315"/>
    <property type="project" value="UniProtKB"/>
</dbReference>
<dbReference type="GO" id="GO:0034138">
    <property type="term" value="P:toll-like receptor 3 signaling pathway"/>
    <property type="evidence" value="ECO:0000266"/>
    <property type="project" value="MGI"/>
</dbReference>
<dbReference type="InterPro" id="IPR028169">
    <property type="entry name" value="Raftlin"/>
</dbReference>
<dbReference type="PANTHER" id="PTHR17601:SF3">
    <property type="entry name" value="RAFTLIN"/>
    <property type="match status" value="1"/>
</dbReference>
<dbReference type="PANTHER" id="PTHR17601">
    <property type="entry name" value="RAFTLIN-RELATED"/>
    <property type="match status" value="1"/>
</dbReference>
<dbReference type="Pfam" id="PF15250">
    <property type="entry name" value="Raftlin"/>
    <property type="match status" value="1"/>
</dbReference>
<name>RFTN1_MOUSE</name>
<gene>
    <name type="primary">Rftn1</name>
    <name type="synonym">Kiaa0084</name>
</gene>
<feature type="initiator methionine" description="Removed" evidence="2">
    <location>
        <position position="1"/>
    </location>
</feature>
<feature type="chain" id="PRO_0000251954" description="Raftlin">
    <location>
        <begin position="2"/>
        <end position="554"/>
    </location>
</feature>
<feature type="region of interest" description="Disordered" evidence="3">
    <location>
        <begin position="192"/>
        <end position="249"/>
    </location>
</feature>
<feature type="region of interest" description="Disordered" evidence="3">
    <location>
        <begin position="441"/>
        <end position="488"/>
    </location>
</feature>
<feature type="region of interest" description="Disordered" evidence="3">
    <location>
        <begin position="504"/>
        <end position="554"/>
    </location>
</feature>
<feature type="compositionally biased region" description="Basic and acidic residues" evidence="3">
    <location>
        <begin position="198"/>
        <end position="209"/>
    </location>
</feature>
<feature type="compositionally biased region" description="Basic and acidic residues" evidence="3">
    <location>
        <begin position="475"/>
        <end position="487"/>
    </location>
</feature>
<feature type="compositionally biased region" description="Basic and acidic residues" evidence="3">
    <location>
        <begin position="526"/>
        <end position="542"/>
    </location>
</feature>
<feature type="modified residue" description="Phosphoserine" evidence="8">
    <location>
        <position position="183"/>
    </location>
</feature>
<feature type="modified residue" description="Phosphoserine" evidence="2">
    <location>
        <position position="199"/>
    </location>
</feature>
<feature type="modified residue" description="Phosphoserine" evidence="9">
    <location>
        <position position="507"/>
    </location>
</feature>
<feature type="modified residue" description="Phosphoserine" evidence="8">
    <location>
        <position position="530"/>
    </location>
</feature>
<feature type="lipid moiety-binding region" description="N-myristoyl glycine" evidence="1">
    <location>
        <position position="2"/>
    </location>
</feature>
<feature type="lipid moiety-binding region" description="S-palmitoyl cysteine" evidence="1">
    <location>
        <position position="3"/>
    </location>
</feature>
<feature type="sequence conflict" description="In Ref. 2; BAE30971/BAE31871." evidence="7" ref="2">
    <original>Q</original>
    <variation>R</variation>
    <location>
        <position position="236"/>
    </location>
</feature>
<feature type="sequence conflict" description="In Ref. 1; BAD32162." evidence="7" ref="1">
    <original>N</original>
    <variation>D</variation>
    <location>
        <position position="472"/>
    </location>
</feature>
<organism>
    <name type="scientific">Mus musculus</name>
    <name type="common">Mouse</name>
    <dbReference type="NCBI Taxonomy" id="10090"/>
    <lineage>
        <taxon>Eukaryota</taxon>
        <taxon>Metazoa</taxon>
        <taxon>Chordata</taxon>
        <taxon>Craniata</taxon>
        <taxon>Vertebrata</taxon>
        <taxon>Euteleostomi</taxon>
        <taxon>Mammalia</taxon>
        <taxon>Eutheria</taxon>
        <taxon>Euarchontoglires</taxon>
        <taxon>Glires</taxon>
        <taxon>Rodentia</taxon>
        <taxon>Myomorpha</taxon>
        <taxon>Muroidea</taxon>
        <taxon>Muridae</taxon>
        <taxon>Murinae</taxon>
        <taxon>Mus</taxon>
        <taxon>Mus</taxon>
    </lineage>
</organism>
<keyword id="KW-1003">Cell membrane</keyword>
<keyword id="KW-0963">Cytoplasm</keyword>
<keyword id="KW-0967">Endosome</keyword>
<keyword id="KW-0449">Lipoprotein</keyword>
<keyword id="KW-0472">Membrane</keyword>
<keyword id="KW-0519">Myristate</keyword>
<keyword id="KW-0564">Palmitate</keyword>
<keyword id="KW-0597">Phosphoprotein</keyword>
<keyword id="KW-1185">Reference proteome</keyword>